<accession>B7M732</accession>
<keyword id="KW-0007">Acetylation</keyword>
<keyword id="KW-0687">Ribonucleoprotein</keyword>
<keyword id="KW-0689">Ribosomal protein</keyword>
<keyword id="KW-0694">RNA-binding</keyword>
<keyword id="KW-0699">rRNA-binding</keyword>
<reference key="1">
    <citation type="journal article" date="2009" name="PLoS Genet.">
        <title>Organised genome dynamics in the Escherichia coli species results in highly diverse adaptive paths.</title>
        <authorList>
            <person name="Touchon M."/>
            <person name="Hoede C."/>
            <person name="Tenaillon O."/>
            <person name="Barbe V."/>
            <person name="Baeriswyl S."/>
            <person name="Bidet P."/>
            <person name="Bingen E."/>
            <person name="Bonacorsi S."/>
            <person name="Bouchier C."/>
            <person name="Bouvet O."/>
            <person name="Calteau A."/>
            <person name="Chiapello H."/>
            <person name="Clermont O."/>
            <person name="Cruveiller S."/>
            <person name="Danchin A."/>
            <person name="Diard M."/>
            <person name="Dossat C."/>
            <person name="Karoui M.E."/>
            <person name="Frapy E."/>
            <person name="Garry L."/>
            <person name="Ghigo J.M."/>
            <person name="Gilles A.M."/>
            <person name="Johnson J."/>
            <person name="Le Bouguenec C."/>
            <person name="Lescat M."/>
            <person name="Mangenot S."/>
            <person name="Martinez-Jehanne V."/>
            <person name="Matic I."/>
            <person name="Nassif X."/>
            <person name="Oztas S."/>
            <person name="Petit M.A."/>
            <person name="Pichon C."/>
            <person name="Rouy Z."/>
            <person name="Ruf C.S."/>
            <person name="Schneider D."/>
            <person name="Tourret J."/>
            <person name="Vacherie B."/>
            <person name="Vallenet D."/>
            <person name="Medigue C."/>
            <person name="Rocha E.P.C."/>
            <person name="Denamur E."/>
        </authorList>
    </citation>
    <scope>NUCLEOTIDE SEQUENCE [LARGE SCALE GENOMIC DNA]</scope>
    <source>
        <strain>IAI1</strain>
    </source>
</reference>
<protein>
    <recommendedName>
        <fullName evidence="1">Large ribosomal subunit protein uL10</fullName>
    </recommendedName>
    <alternativeName>
        <fullName evidence="2">50S ribosomal protein L10</fullName>
    </alternativeName>
</protein>
<organism>
    <name type="scientific">Escherichia coli O8 (strain IAI1)</name>
    <dbReference type="NCBI Taxonomy" id="585034"/>
    <lineage>
        <taxon>Bacteria</taxon>
        <taxon>Pseudomonadati</taxon>
        <taxon>Pseudomonadota</taxon>
        <taxon>Gammaproteobacteria</taxon>
        <taxon>Enterobacterales</taxon>
        <taxon>Enterobacteriaceae</taxon>
        <taxon>Escherichia</taxon>
    </lineage>
</organism>
<feature type="chain" id="PRO_1000120955" description="Large ribosomal subunit protein uL10">
    <location>
        <begin position="1"/>
        <end position="165"/>
    </location>
</feature>
<feature type="modified residue" description="N6-acetyllysine" evidence="1">
    <location>
        <position position="37"/>
    </location>
</feature>
<feature type="modified residue" description="N6-acetyllysine" evidence="1">
    <location>
        <position position="105"/>
    </location>
</feature>
<sequence length="165" mass="17712">MALNLQDKQAIVAEVSEVAKGALSAVVADSRGVTVDKMTELRKAGREAGVYMRVVRNTLLRRAVEGTPFECLKDAFVGPTLIAYSMEHPGAAARLFKEFAKANAKFEVKAAAFEGELIPASQIDRLATLPTYEEAIARLMATMKEASAGKLVRTLAAVRDAKEAA</sequence>
<proteinExistence type="inferred from homology"/>
<evidence type="ECO:0000255" key="1">
    <source>
        <dbReference type="HAMAP-Rule" id="MF_00362"/>
    </source>
</evidence>
<evidence type="ECO:0000305" key="2"/>
<name>RL10_ECO8A</name>
<gene>
    <name evidence="1" type="primary">rplJ</name>
    <name type="ordered locus">ECIAI1_4199</name>
</gene>
<comment type="function">
    <text evidence="1">Forms part of the ribosomal stalk, playing a central role in the interaction of the ribosome with GTP-bound translation factors.</text>
</comment>
<comment type="subunit">
    <text evidence="1">Part of the ribosomal stalk of the 50S ribosomal subunit. The N-terminus interacts with L11 and the large rRNA to form the base of the stalk. The C-terminus forms an elongated spine to which L12 dimers bind in a sequential fashion forming a multimeric L10(L12)X complex.</text>
</comment>
<comment type="similarity">
    <text evidence="1">Belongs to the universal ribosomal protein uL10 family.</text>
</comment>
<dbReference type="EMBL" id="CU928160">
    <property type="protein sequence ID" value="CAR00958.1"/>
    <property type="molecule type" value="Genomic_DNA"/>
</dbReference>
<dbReference type="RefSeq" id="WP_001207201.1">
    <property type="nucleotide sequence ID" value="NC_011741.1"/>
</dbReference>
<dbReference type="SMR" id="B7M732"/>
<dbReference type="GeneID" id="93777909"/>
<dbReference type="KEGG" id="ecr:ECIAI1_4199"/>
<dbReference type="HOGENOM" id="CLU_092227_0_2_6"/>
<dbReference type="GO" id="GO:0015934">
    <property type="term" value="C:large ribosomal subunit"/>
    <property type="evidence" value="ECO:0007669"/>
    <property type="project" value="InterPro"/>
</dbReference>
<dbReference type="GO" id="GO:0070180">
    <property type="term" value="F:large ribosomal subunit rRNA binding"/>
    <property type="evidence" value="ECO:0007669"/>
    <property type="project" value="UniProtKB-UniRule"/>
</dbReference>
<dbReference type="GO" id="GO:0003735">
    <property type="term" value="F:structural constituent of ribosome"/>
    <property type="evidence" value="ECO:0007669"/>
    <property type="project" value="InterPro"/>
</dbReference>
<dbReference type="GO" id="GO:0006412">
    <property type="term" value="P:translation"/>
    <property type="evidence" value="ECO:0007669"/>
    <property type="project" value="UniProtKB-UniRule"/>
</dbReference>
<dbReference type="CDD" id="cd05797">
    <property type="entry name" value="Ribosomal_L10"/>
    <property type="match status" value="1"/>
</dbReference>
<dbReference type="FunFam" id="3.30.70.1730:FF:000001">
    <property type="entry name" value="50S ribosomal protein L10"/>
    <property type="match status" value="1"/>
</dbReference>
<dbReference type="Gene3D" id="3.30.70.1730">
    <property type="match status" value="1"/>
</dbReference>
<dbReference type="Gene3D" id="6.10.250.2350">
    <property type="match status" value="1"/>
</dbReference>
<dbReference type="HAMAP" id="MF_00362">
    <property type="entry name" value="Ribosomal_uL10"/>
    <property type="match status" value="1"/>
</dbReference>
<dbReference type="InterPro" id="IPR001790">
    <property type="entry name" value="Ribosomal_uL10"/>
</dbReference>
<dbReference type="InterPro" id="IPR043141">
    <property type="entry name" value="Ribosomal_uL10-like_sf"/>
</dbReference>
<dbReference type="InterPro" id="IPR022973">
    <property type="entry name" value="Ribosomal_uL10_bac"/>
</dbReference>
<dbReference type="InterPro" id="IPR047865">
    <property type="entry name" value="Ribosomal_uL10_bac_type"/>
</dbReference>
<dbReference type="InterPro" id="IPR002363">
    <property type="entry name" value="Ribosomal_uL10_CS_bac"/>
</dbReference>
<dbReference type="NCBIfam" id="NF000955">
    <property type="entry name" value="PRK00099.1-1"/>
    <property type="match status" value="1"/>
</dbReference>
<dbReference type="PANTHER" id="PTHR11560">
    <property type="entry name" value="39S RIBOSOMAL PROTEIN L10, MITOCHONDRIAL"/>
    <property type="match status" value="1"/>
</dbReference>
<dbReference type="Pfam" id="PF00466">
    <property type="entry name" value="Ribosomal_L10"/>
    <property type="match status" value="1"/>
</dbReference>
<dbReference type="SUPFAM" id="SSF160369">
    <property type="entry name" value="Ribosomal protein L10-like"/>
    <property type="match status" value="1"/>
</dbReference>
<dbReference type="PROSITE" id="PS01109">
    <property type="entry name" value="RIBOSOMAL_L10"/>
    <property type="match status" value="1"/>
</dbReference>